<gene>
    <name type="primary">alr1</name>
    <name type="ordered locus">VC_0372</name>
</gene>
<protein>
    <recommendedName>
        <fullName evidence="1">Alanine racemase</fullName>
        <ecNumber evidence="1">5.1.1.1</ecNumber>
    </recommendedName>
</protein>
<reference key="1">
    <citation type="journal article" date="2000" name="Nature">
        <title>DNA sequence of both chromosomes of the cholera pathogen Vibrio cholerae.</title>
        <authorList>
            <person name="Heidelberg J.F."/>
            <person name="Eisen J.A."/>
            <person name="Nelson W.C."/>
            <person name="Clayton R.A."/>
            <person name="Gwinn M.L."/>
            <person name="Dodson R.J."/>
            <person name="Haft D.H."/>
            <person name="Hickey E.K."/>
            <person name="Peterson J.D."/>
            <person name="Umayam L.A."/>
            <person name="Gill S.R."/>
            <person name="Nelson K.E."/>
            <person name="Read T.D."/>
            <person name="Tettelin H."/>
            <person name="Richardson D.L."/>
            <person name="Ermolaeva M.D."/>
            <person name="Vamathevan J.J."/>
            <person name="Bass S."/>
            <person name="Qin H."/>
            <person name="Dragoi I."/>
            <person name="Sellers P."/>
            <person name="McDonald L.A."/>
            <person name="Utterback T.R."/>
            <person name="Fleischmann R.D."/>
            <person name="Nierman W.C."/>
            <person name="White O."/>
            <person name="Salzberg S.L."/>
            <person name="Smith H.O."/>
            <person name="Colwell R.R."/>
            <person name="Mekalanos J.J."/>
            <person name="Venter J.C."/>
            <person name="Fraser C.M."/>
        </authorList>
    </citation>
    <scope>NUCLEOTIDE SEQUENCE [LARGE SCALE GENOMIC DNA]</scope>
    <source>
        <strain>ATCC 39315 / El Tor Inaba N16961</strain>
    </source>
</reference>
<reference key="2">
    <citation type="journal article" date="2014" name="Acta Crystallogr. D">
        <title>Structural basis for the broad specificity of a new family of amino-acid racemases.</title>
        <authorList>
            <person name="Espaillat A."/>
            <person name="Carrasco-Lopez C."/>
            <person name="Bernardo-Garcia N."/>
            <person name="Pietrosemoli N."/>
            <person name="Otero L.H."/>
            <person name="Alvarez L."/>
            <person name="de Pedro M.A."/>
            <person name="Pazos F."/>
            <person name="Davis B.M."/>
            <person name="Waldor M.K."/>
            <person name="Hermoso J.A."/>
            <person name="Cava F."/>
        </authorList>
    </citation>
    <scope>FUNCTION</scope>
    <scope>CATALYTIC ACTIVITY</scope>
    <scope>BIOPHYSICOCHEMICAL PROPERTIES</scope>
    <scope>SUBSTRATE SPECIFICITY</scope>
    <source>
        <strain>ATCC 39315 / El Tor Inaba N16961</strain>
    </source>
</reference>
<comment type="function">
    <text evidence="2">Catalyzes the interconversion of L-alanine and D-alanine. Likely plays an important role in supplying D-alanine, which is an indispensable constituent in the biosynthesis of bacterial cell-wall peptidoglycan. To a lesser extent, is also able to racemize L-serine and D-serine. Does not act on other proteinogenic amino-acids.</text>
</comment>
<comment type="catalytic activity">
    <reaction evidence="1 2">
        <text>L-alanine = D-alanine</text>
        <dbReference type="Rhea" id="RHEA:20249"/>
        <dbReference type="ChEBI" id="CHEBI:57416"/>
        <dbReference type="ChEBI" id="CHEBI:57972"/>
        <dbReference type="EC" id="5.1.1.1"/>
    </reaction>
</comment>
<comment type="catalytic activity">
    <reaction evidence="2">
        <text>L-serine = D-serine</text>
        <dbReference type="Rhea" id="RHEA:10980"/>
        <dbReference type="ChEBI" id="CHEBI:33384"/>
        <dbReference type="ChEBI" id="CHEBI:35247"/>
    </reaction>
</comment>
<comment type="cofactor">
    <cofactor evidence="1">
        <name>pyridoxal 5'-phosphate</name>
        <dbReference type="ChEBI" id="CHEBI:597326"/>
    </cofactor>
</comment>
<comment type="biophysicochemical properties">
    <kinetics>
        <KM evidence="2">1.5 mM for L-alanine</KM>
        <KM evidence="2">17 mM for L-serine</KM>
        <text evidence="2">kcat is 1.42 sec(-1) with L-alanine as substrate. kcat is 1.16 sec(-1) with L-serine as substrate.</text>
    </kinetics>
</comment>
<comment type="pathway">
    <text evidence="1">Amino-acid biosynthesis; D-alanine biosynthesis; D-alanine from L-alanine: step 1/1.</text>
</comment>
<comment type="similarity">
    <text evidence="1">Belongs to the alanine racemase family.</text>
</comment>
<comment type="sequence caution" evidence="3">
    <conflict type="erroneous initiation">
        <sequence resource="EMBL-CDS" id="AAF93545"/>
    </conflict>
</comment>
<organism>
    <name type="scientific">Vibrio cholerae serotype O1 (strain ATCC 39315 / El Tor Inaba N16961)</name>
    <dbReference type="NCBI Taxonomy" id="243277"/>
    <lineage>
        <taxon>Bacteria</taxon>
        <taxon>Pseudomonadati</taxon>
        <taxon>Pseudomonadota</taxon>
        <taxon>Gammaproteobacteria</taxon>
        <taxon>Vibrionales</taxon>
        <taxon>Vibrionaceae</taxon>
        <taxon>Vibrio</taxon>
    </lineage>
</organism>
<proteinExistence type="evidence at protein level"/>
<accession>Q9KUY6</accession>
<feature type="chain" id="PRO_0000114591" description="Alanine racemase">
    <location>
        <begin position="1"/>
        <end position="361"/>
    </location>
</feature>
<feature type="active site" description="Proton acceptor; specific for D-alanine" evidence="1">
    <location>
        <position position="34"/>
    </location>
</feature>
<feature type="active site" description="Proton acceptor; specific for L-alanine" evidence="1">
    <location>
        <position position="254"/>
    </location>
</feature>
<feature type="binding site" evidence="1">
    <location>
        <position position="129"/>
    </location>
    <ligand>
        <name>substrate</name>
    </ligand>
</feature>
<feature type="binding site" evidence="1">
    <location>
        <position position="302"/>
    </location>
    <ligand>
        <name>substrate</name>
    </ligand>
</feature>
<feature type="modified residue" description="N6-(pyridoxal phosphate)lysine" evidence="1">
    <location>
        <position position="34"/>
    </location>
</feature>
<sequence>MKAATAYINLEALQHNLQRVKQQAPESKIMAVVKANGYGHGLRHIARHALGADAFGVARIEEALQLRASGVVKPILLLEGFYSPGDLPVLVTNNIQTVVHCEEQLQALEQAQLETPVMVWLKVDSGMHRLGVRPEQYQDFVARLHQCENVAKPLRYMSHFGCADELDKSTTVEQTELFLSLTQGCQGERSLAASAGLLAWPQSQLEWVRPGIIMYGVSPFVEKSAVQLGYQPVMTLKSHLIAVREVKAGESVGYGGTWTSQRDTKIGVIAIGYGDGYPRTAPNGTPVVVNGRRVPIAGRVSMDMLTVDLGPDACDRVGDEAMLWGNELPVEEVAAHIGTIGYELVTKLTSRVEMSYYGAGV</sequence>
<keyword id="KW-0413">Isomerase</keyword>
<keyword id="KW-0663">Pyridoxal phosphate</keyword>
<keyword id="KW-1185">Reference proteome</keyword>
<name>ALR_VIBCH</name>
<evidence type="ECO:0000255" key="1">
    <source>
        <dbReference type="HAMAP-Rule" id="MF_01201"/>
    </source>
</evidence>
<evidence type="ECO:0000269" key="2">
    <source>
    </source>
</evidence>
<evidence type="ECO:0000305" key="3"/>
<dbReference type="EC" id="5.1.1.1" evidence="1"/>
<dbReference type="EMBL" id="AE003852">
    <property type="protein sequence ID" value="AAF93545.1"/>
    <property type="status" value="ALT_INIT"/>
    <property type="molecule type" value="Genomic_DNA"/>
</dbReference>
<dbReference type="PIR" id="H82329">
    <property type="entry name" value="H82329"/>
</dbReference>
<dbReference type="RefSeq" id="NP_230026.1">
    <property type="nucleotide sequence ID" value="NC_002505.1"/>
</dbReference>
<dbReference type="SMR" id="Q9KUY6"/>
<dbReference type="STRING" id="243277.VC_0372"/>
<dbReference type="DNASU" id="2615051"/>
<dbReference type="EnsemblBacteria" id="AAF93545">
    <property type="protein sequence ID" value="AAF93545"/>
    <property type="gene ID" value="VC_0372"/>
</dbReference>
<dbReference type="KEGG" id="vch:VC_0372"/>
<dbReference type="PATRIC" id="fig|243277.26.peg.348"/>
<dbReference type="eggNOG" id="COG0787">
    <property type="taxonomic scope" value="Bacteria"/>
</dbReference>
<dbReference type="HOGENOM" id="CLU_028393_1_0_6"/>
<dbReference type="UniPathway" id="UPA00042">
    <property type="reaction ID" value="UER00497"/>
</dbReference>
<dbReference type="Proteomes" id="UP000000584">
    <property type="component" value="Chromosome 1"/>
</dbReference>
<dbReference type="GO" id="GO:0005829">
    <property type="term" value="C:cytosol"/>
    <property type="evidence" value="ECO:0000318"/>
    <property type="project" value="GO_Central"/>
</dbReference>
<dbReference type="GO" id="GO:0008784">
    <property type="term" value="F:alanine racemase activity"/>
    <property type="evidence" value="ECO:0000318"/>
    <property type="project" value="GO_Central"/>
</dbReference>
<dbReference type="GO" id="GO:0030170">
    <property type="term" value="F:pyridoxal phosphate binding"/>
    <property type="evidence" value="ECO:0000318"/>
    <property type="project" value="GO_Central"/>
</dbReference>
<dbReference type="GO" id="GO:0030378">
    <property type="term" value="F:serine racemase activity"/>
    <property type="evidence" value="ECO:0007669"/>
    <property type="project" value="RHEA"/>
</dbReference>
<dbReference type="GO" id="GO:0030632">
    <property type="term" value="P:D-alanine biosynthetic process"/>
    <property type="evidence" value="ECO:0000318"/>
    <property type="project" value="GO_Central"/>
</dbReference>
<dbReference type="CDD" id="cd06827">
    <property type="entry name" value="PLPDE_III_AR_proteobact"/>
    <property type="match status" value="1"/>
</dbReference>
<dbReference type="FunFam" id="2.40.37.10:FF:000002">
    <property type="entry name" value="Alanine racemase"/>
    <property type="match status" value="1"/>
</dbReference>
<dbReference type="FunFam" id="3.20.20.10:FF:000002">
    <property type="entry name" value="Alanine racemase"/>
    <property type="match status" value="1"/>
</dbReference>
<dbReference type="Gene3D" id="3.20.20.10">
    <property type="entry name" value="Alanine racemase"/>
    <property type="match status" value="1"/>
</dbReference>
<dbReference type="Gene3D" id="2.40.37.10">
    <property type="entry name" value="Lyase, Ornithine Decarboxylase, Chain A, domain 1"/>
    <property type="match status" value="1"/>
</dbReference>
<dbReference type="HAMAP" id="MF_01201">
    <property type="entry name" value="Ala_racemase"/>
    <property type="match status" value="1"/>
</dbReference>
<dbReference type="InterPro" id="IPR000821">
    <property type="entry name" value="Ala_racemase"/>
</dbReference>
<dbReference type="InterPro" id="IPR009006">
    <property type="entry name" value="Ala_racemase/Decarboxylase_C"/>
</dbReference>
<dbReference type="InterPro" id="IPR011079">
    <property type="entry name" value="Ala_racemase_C"/>
</dbReference>
<dbReference type="InterPro" id="IPR001608">
    <property type="entry name" value="Ala_racemase_N"/>
</dbReference>
<dbReference type="InterPro" id="IPR020622">
    <property type="entry name" value="Ala_racemase_pyridoxalP-BS"/>
</dbReference>
<dbReference type="InterPro" id="IPR029066">
    <property type="entry name" value="PLP-binding_barrel"/>
</dbReference>
<dbReference type="NCBIfam" id="TIGR00492">
    <property type="entry name" value="alr"/>
    <property type="match status" value="1"/>
</dbReference>
<dbReference type="PANTHER" id="PTHR30511">
    <property type="entry name" value="ALANINE RACEMASE"/>
    <property type="match status" value="1"/>
</dbReference>
<dbReference type="PANTHER" id="PTHR30511:SF4">
    <property type="entry name" value="ALANINE RACEMASE, BIOSYNTHETIC"/>
    <property type="match status" value="1"/>
</dbReference>
<dbReference type="Pfam" id="PF00842">
    <property type="entry name" value="Ala_racemase_C"/>
    <property type="match status" value="1"/>
</dbReference>
<dbReference type="Pfam" id="PF01168">
    <property type="entry name" value="Ala_racemase_N"/>
    <property type="match status" value="1"/>
</dbReference>
<dbReference type="PRINTS" id="PR00992">
    <property type="entry name" value="ALARACEMASE"/>
</dbReference>
<dbReference type="SMART" id="SM01005">
    <property type="entry name" value="Ala_racemase_C"/>
    <property type="match status" value="1"/>
</dbReference>
<dbReference type="SUPFAM" id="SSF50621">
    <property type="entry name" value="Alanine racemase C-terminal domain-like"/>
    <property type="match status" value="1"/>
</dbReference>
<dbReference type="SUPFAM" id="SSF51419">
    <property type="entry name" value="PLP-binding barrel"/>
    <property type="match status" value="1"/>
</dbReference>
<dbReference type="PROSITE" id="PS00395">
    <property type="entry name" value="ALANINE_RACEMASE"/>
    <property type="match status" value="1"/>
</dbReference>